<accession>Q7U9J4</accession>
<protein>
    <recommendedName>
        <fullName evidence="1">3-isopropylmalate dehydratase large subunit</fullName>
        <ecNumber evidence="1">4.2.1.33</ecNumber>
    </recommendedName>
    <alternativeName>
        <fullName evidence="1">Alpha-IPM isomerase</fullName>
        <shortName evidence="1">IPMI</shortName>
    </alternativeName>
    <alternativeName>
        <fullName evidence="1">Isopropylmalate isomerase</fullName>
    </alternativeName>
</protein>
<name>LEUC_PARMW</name>
<keyword id="KW-0004">4Fe-4S</keyword>
<keyword id="KW-0028">Amino-acid biosynthesis</keyword>
<keyword id="KW-0100">Branched-chain amino acid biosynthesis</keyword>
<keyword id="KW-0408">Iron</keyword>
<keyword id="KW-0411">Iron-sulfur</keyword>
<keyword id="KW-0432">Leucine biosynthesis</keyword>
<keyword id="KW-0456">Lyase</keyword>
<keyword id="KW-0479">Metal-binding</keyword>
<dbReference type="EC" id="4.2.1.33" evidence="1"/>
<dbReference type="EMBL" id="BX569689">
    <property type="protein sequence ID" value="CAE06777.1"/>
    <property type="molecule type" value="Genomic_DNA"/>
</dbReference>
<dbReference type="RefSeq" id="WP_011127138.1">
    <property type="nucleotide sequence ID" value="NC_005070.1"/>
</dbReference>
<dbReference type="SMR" id="Q7U9J4"/>
<dbReference type="STRING" id="84588.SYNW0262"/>
<dbReference type="KEGG" id="syw:SYNW0262"/>
<dbReference type="eggNOG" id="COG0065">
    <property type="taxonomic scope" value="Bacteria"/>
</dbReference>
<dbReference type="HOGENOM" id="CLU_006714_3_4_3"/>
<dbReference type="UniPathway" id="UPA00048">
    <property type="reaction ID" value="UER00071"/>
</dbReference>
<dbReference type="Proteomes" id="UP000001422">
    <property type="component" value="Chromosome"/>
</dbReference>
<dbReference type="GO" id="GO:0003861">
    <property type="term" value="F:3-isopropylmalate dehydratase activity"/>
    <property type="evidence" value="ECO:0007669"/>
    <property type="project" value="UniProtKB-UniRule"/>
</dbReference>
<dbReference type="GO" id="GO:0051539">
    <property type="term" value="F:4 iron, 4 sulfur cluster binding"/>
    <property type="evidence" value="ECO:0007669"/>
    <property type="project" value="UniProtKB-KW"/>
</dbReference>
<dbReference type="GO" id="GO:0046872">
    <property type="term" value="F:metal ion binding"/>
    <property type="evidence" value="ECO:0007669"/>
    <property type="project" value="UniProtKB-KW"/>
</dbReference>
<dbReference type="GO" id="GO:0009098">
    <property type="term" value="P:L-leucine biosynthetic process"/>
    <property type="evidence" value="ECO:0007669"/>
    <property type="project" value="UniProtKB-UniRule"/>
</dbReference>
<dbReference type="CDD" id="cd01583">
    <property type="entry name" value="IPMI"/>
    <property type="match status" value="1"/>
</dbReference>
<dbReference type="Gene3D" id="3.30.499.10">
    <property type="entry name" value="Aconitase, domain 3"/>
    <property type="match status" value="2"/>
</dbReference>
<dbReference type="HAMAP" id="MF_01026">
    <property type="entry name" value="LeuC_type1"/>
    <property type="match status" value="1"/>
</dbReference>
<dbReference type="InterPro" id="IPR004430">
    <property type="entry name" value="3-IsopropMal_deHydase_lsu"/>
</dbReference>
<dbReference type="InterPro" id="IPR015931">
    <property type="entry name" value="Acnase/IPM_dHydase_lsu_aba_1/3"/>
</dbReference>
<dbReference type="InterPro" id="IPR001030">
    <property type="entry name" value="Acoase/IPM_deHydtase_lsu_aba"/>
</dbReference>
<dbReference type="InterPro" id="IPR018136">
    <property type="entry name" value="Aconitase_4Fe-4S_BS"/>
</dbReference>
<dbReference type="InterPro" id="IPR036008">
    <property type="entry name" value="Aconitase_4Fe-4S_dom"/>
</dbReference>
<dbReference type="InterPro" id="IPR050067">
    <property type="entry name" value="IPM_dehydratase_rel_enz"/>
</dbReference>
<dbReference type="InterPro" id="IPR033941">
    <property type="entry name" value="IPMI_cat"/>
</dbReference>
<dbReference type="NCBIfam" id="TIGR00170">
    <property type="entry name" value="leuC"/>
    <property type="match status" value="1"/>
</dbReference>
<dbReference type="NCBIfam" id="NF004016">
    <property type="entry name" value="PRK05478.1"/>
    <property type="match status" value="1"/>
</dbReference>
<dbReference type="NCBIfam" id="NF009116">
    <property type="entry name" value="PRK12466.1"/>
    <property type="match status" value="1"/>
</dbReference>
<dbReference type="PANTHER" id="PTHR43822:SF9">
    <property type="entry name" value="3-ISOPROPYLMALATE DEHYDRATASE"/>
    <property type="match status" value="1"/>
</dbReference>
<dbReference type="PANTHER" id="PTHR43822">
    <property type="entry name" value="HOMOACONITASE, MITOCHONDRIAL-RELATED"/>
    <property type="match status" value="1"/>
</dbReference>
<dbReference type="Pfam" id="PF00330">
    <property type="entry name" value="Aconitase"/>
    <property type="match status" value="1"/>
</dbReference>
<dbReference type="PRINTS" id="PR00415">
    <property type="entry name" value="ACONITASE"/>
</dbReference>
<dbReference type="SUPFAM" id="SSF53732">
    <property type="entry name" value="Aconitase iron-sulfur domain"/>
    <property type="match status" value="1"/>
</dbReference>
<dbReference type="PROSITE" id="PS00450">
    <property type="entry name" value="ACONITASE_1"/>
    <property type="match status" value="1"/>
</dbReference>
<dbReference type="PROSITE" id="PS01244">
    <property type="entry name" value="ACONITASE_2"/>
    <property type="match status" value="1"/>
</dbReference>
<comment type="function">
    <text evidence="1">Catalyzes the isomerization between 2-isopropylmalate and 3-isopropylmalate, via the formation of 2-isopropylmaleate.</text>
</comment>
<comment type="catalytic activity">
    <reaction evidence="1">
        <text>(2R,3S)-3-isopropylmalate = (2S)-2-isopropylmalate</text>
        <dbReference type="Rhea" id="RHEA:32287"/>
        <dbReference type="ChEBI" id="CHEBI:1178"/>
        <dbReference type="ChEBI" id="CHEBI:35121"/>
        <dbReference type="EC" id="4.2.1.33"/>
    </reaction>
</comment>
<comment type="cofactor">
    <cofactor evidence="1">
        <name>[4Fe-4S] cluster</name>
        <dbReference type="ChEBI" id="CHEBI:49883"/>
    </cofactor>
    <text evidence="1">Binds 1 [4Fe-4S] cluster per subunit.</text>
</comment>
<comment type="pathway">
    <text evidence="1">Amino-acid biosynthesis; L-leucine biosynthesis; L-leucine from 3-methyl-2-oxobutanoate: step 2/4.</text>
</comment>
<comment type="subunit">
    <text evidence="1">Heterodimer of LeuC and LeuD.</text>
</comment>
<comment type="similarity">
    <text evidence="1">Belongs to the aconitase/IPM isomerase family. LeuC type 1 subfamily.</text>
</comment>
<evidence type="ECO:0000255" key="1">
    <source>
        <dbReference type="HAMAP-Rule" id="MF_01026"/>
    </source>
</evidence>
<feature type="chain" id="PRO_0000076830" description="3-isopropylmalate dehydratase large subunit">
    <location>
        <begin position="1"/>
        <end position="472"/>
    </location>
</feature>
<feature type="binding site" evidence="1">
    <location>
        <position position="347"/>
    </location>
    <ligand>
        <name>[4Fe-4S] cluster</name>
        <dbReference type="ChEBI" id="CHEBI:49883"/>
    </ligand>
</feature>
<feature type="binding site" evidence="1">
    <location>
        <position position="407"/>
    </location>
    <ligand>
        <name>[4Fe-4S] cluster</name>
        <dbReference type="ChEBI" id="CHEBI:49883"/>
    </ligand>
</feature>
<feature type="binding site" evidence="1">
    <location>
        <position position="410"/>
    </location>
    <ligand>
        <name>[4Fe-4S] cluster</name>
        <dbReference type="ChEBI" id="CHEBI:49883"/>
    </ligand>
</feature>
<gene>
    <name evidence="1" type="primary">leuC</name>
    <name type="ordered locus">SYNW0262</name>
</gene>
<reference key="1">
    <citation type="journal article" date="2003" name="Nature">
        <title>The genome of a motile marine Synechococcus.</title>
        <authorList>
            <person name="Palenik B."/>
            <person name="Brahamsha B."/>
            <person name="Larimer F.W."/>
            <person name="Land M.L."/>
            <person name="Hauser L."/>
            <person name="Chain P."/>
            <person name="Lamerdin J.E."/>
            <person name="Regala W."/>
            <person name="Allen E.E."/>
            <person name="McCarren J."/>
            <person name="Paulsen I.T."/>
            <person name="Dufresne A."/>
            <person name="Partensky F."/>
            <person name="Webb E.A."/>
            <person name="Waterbury J."/>
        </authorList>
    </citation>
    <scope>NUCLEOTIDE SEQUENCE [LARGE SCALE GENOMIC DNA]</scope>
    <source>
        <strain>WH8102</strain>
    </source>
</reference>
<proteinExistence type="inferred from homology"/>
<sequence>MSSGTLYDKVWDLHRVAELPGGSTQLFVGLHLIHEVTSPQAFAALRDKGLSVRCPERTVATVDHIVPTTSQSRPFADSLAEEMLSTLERNCADHGITLNGIGSGRQGIVHVIAPELGLTQPGMTVACGDSHTSTHGAFGAIAFGIGTSQVRDVLASQSLAMSKLKVRRIQVNGRLSDGVSAKDLILHVIRTLGVKGGVGFAYEFAGPAVEALSMEERMTLCNMAIEGGARCGYVNPDQVTFDYLSGRAGAPSGAAWDRAVSWWRGLASDPDAVVDDEVVFDAASIAPTVTWGITPGQGLGIDECIPQLEQLEPGERPIAEEAYRYMDLQPGTAIAGVPVDVCFIGSCTNGRLSDLRAAAAVARGRHVADGIKAFVVPGSEQVAKAAEAEGLDRVFQDAGFEWREPGCSMCLAMNPDRLEGRQISASSSNRNFKGRQGSASGRTLLMSPAMVAAAAVHGQVTDVRTLSLQSAV</sequence>
<organism>
    <name type="scientific">Parasynechococcus marenigrum (strain WH8102)</name>
    <dbReference type="NCBI Taxonomy" id="84588"/>
    <lineage>
        <taxon>Bacteria</taxon>
        <taxon>Bacillati</taxon>
        <taxon>Cyanobacteriota</taxon>
        <taxon>Cyanophyceae</taxon>
        <taxon>Synechococcales</taxon>
        <taxon>Prochlorococcaceae</taxon>
        <taxon>Parasynechococcus</taxon>
        <taxon>Parasynechococcus marenigrum</taxon>
    </lineage>
</organism>